<evidence type="ECO:0000255" key="1">
    <source>
        <dbReference type="HAMAP-Rule" id="MF_01008"/>
    </source>
</evidence>
<evidence type="ECO:0000255" key="2">
    <source>
        <dbReference type="PROSITE-ProRule" id="PRU01076"/>
    </source>
</evidence>
<evidence type="ECO:0000305" key="3"/>
<reference key="1">
    <citation type="journal article" date="2004" name="Science">
        <title>The genomic sequence of the accidental pathogen Legionella pneumophila.</title>
        <authorList>
            <person name="Chien M."/>
            <person name="Morozova I."/>
            <person name="Shi S."/>
            <person name="Sheng H."/>
            <person name="Chen J."/>
            <person name="Gomez S.M."/>
            <person name="Asamani G."/>
            <person name="Hill K."/>
            <person name="Nuara J."/>
            <person name="Feder M."/>
            <person name="Rineer J."/>
            <person name="Greenberg J.J."/>
            <person name="Steshenko V."/>
            <person name="Park S.H."/>
            <person name="Zhao B."/>
            <person name="Teplitskaya E."/>
            <person name="Edwards J.R."/>
            <person name="Pampou S."/>
            <person name="Georghiou A."/>
            <person name="Chou I.-C."/>
            <person name="Iannuccilli W."/>
            <person name="Ulz M.E."/>
            <person name="Kim D.H."/>
            <person name="Geringer-Sameth A."/>
            <person name="Goldsberry C."/>
            <person name="Morozov P."/>
            <person name="Fischer S.G."/>
            <person name="Segal G."/>
            <person name="Qu X."/>
            <person name="Rzhetsky A."/>
            <person name="Zhang P."/>
            <person name="Cayanis E."/>
            <person name="De Jong P.J."/>
            <person name="Ju J."/>
            <person name="Kalachikov S."/>
            <person name="Shuman H.A."/>
            <person name="Russo J.J."/>
        </authorList>
    </citation>
    <scope>NUCLEOTIDE SEQUENCE [LARGE SCALE GENOMIC DNA]</scope>
    <source>
        <strain>Philadelphia 1 / ATCC 33152 / DSM 7513</strain>
    </source>
</reference>
<proteinExistence type="inferred from homology"/>
<gene>
    <name evidence="1" type="primary">mraZ</name>
    <name type="ordered locus">lpg0913</name>
</gene>
<accession>Q5ZX20</accession>
<protein>
    <recommendedName>
        <fullName>Transcriptional regulator MraZ</fullName>
    </recommendedName>
</protein>
<comment type="subunit">
    <text evidence="1">Forms oligomers.</text>
</comment>
<comment type="subcellular location">
    <subcellularLocation>
        <location evidence="1">Cytoplasm</location>
        <location evidence="1">Nucleoid</location>
    </subcellularLocation>
</comment>
<comment type="similarity">
    <text evidence="1">Belongs to the MraZ family.</text>
</comment>
<comment type="sequence caution" evidence="3">
    <conflict type="erroneous initiation">
        <sequence resource="EMBL-CDS" id="AAU27000"/>
    </conflict>
</comment>
<sequence>MFRGINAITIDTKGRLAIPTRYRSALGAEDKIPLVVTIDTEETCLLLYTAAQWQIIEDNLQKLPSFNAAARRIQRLLIGHATDVEVDANGRVLLPTVLRNYAKLEKDVVMIGQGNKFEVWNKELWESKREQWLAEEASMTDGLPEEMKTFSL</sequence>
<name>MRAZ_LEGPH</name>
<organism>
    <name type="scientific">Legionella pneumophila subsp. pneumophila (strain Philadelphia 1 / ATCC 33152 / DSM 7513)</name>
    <dbReference type="NCBI Taxonomy" id="272624"/>
    <lineage>
        <taxon>Bacteria</taxon>
        <taxon>Pseudomonadati</taxon>
        <taxon>Pseudomonadota</taxon>
        <taxon>Gammaproteobacteria</taxon>
        <taxon>Legionellales</taxon>
        <taxon>Legionellaceae</taxon>
        <taxon>Legionella</taxon>
    </lineage>
</organism>
<keyword id="KW-0963">Cytoplasm</keyword>
<keyword id="KW-0238">DNA-binding</keyword>
<keyword id="KW-1185">Reference proteome</keyword>
<keyword id="KW-0677">Repeat</keyword>
<keyword id="KW-0804">Transcription</keyword>
<keyword id="KW-0805">Transcription regulation</keyword>
<feature type="chain" id="PRO_0000108492" description="Transcriptional regulator MraZ">
    <location>
        <begin position="1"/>
        <end position="152"/>
    </location>
</feature>
<feature type="domain" description="SpoVT-AbrB 1" evidence="2">
    <location>
        <begin position="5"/>
        <end position="52"/>
    </location>
</feature>
<feature type="domain" description="SpoVT-AbrB 2" evidence="2">
    <location>
        <begin position="81"/>
        <end position="124"/>
    </location>
</feature>
<dbReference type="EMBL" id="AE017354">
    <property type="protein sequence ID" value="AAU27000.1"/>
    <property type="status" value="ALT_INIT"/>
    <property type="molecule type" value="Genomic_DNA"/>
</dbReference>
<dbReference type="RefSeq" id="WP_011213343.1">
    <property type="nucleotide sequence ID" value="NC_002942.5"/>
</dbReference>
<dbReference type="RefSeq" id="YP_094947.1">
    <property type="nucleotide sequence ID" value="NC_002942.5"/>
</dbReference>
<dbReference type="SMR" id="Q5ZX20"/>
<dbReference type="STRING" id="272624.lpg0913"/>
<dbReference type="PaxDb" id="272624-lpg0913"/>
<dbReference type="GeneID" id="57034901"/>
<dbReference type="KEGG" id="lpn:lpg0913"/>
<dbReference type="PATRIC" id="fig|272624.6.peg.945"/>
<dbReference type="eggNOG" id="COG2001">
    <property type="taxonomic scope" value="Bacteria"/>
</dbReference>
<dbReference type="HOGENOM" id="CLU_107907_2_0_6"/>
<dbReference type="OrthoDB" id="9807753at2"/>
<dbReference type="Proteomes" id="UP000000609">
    <property type="component" value="Chromosome"/>
</dbReference>
<dbReference type="GO" id="GO:0005737">
    <property type="term" value="C:cytoplasm"/>
    <property type="evidence" value="ECO:0007669"/>
    <property type="project" value="UniProtKB-UniRule"/>
</dbReference>
<dbReference type="GO" id="GO:0009295">
    <property type="term" value="C:nucleoid"/>
    <property type="evidence" value="ECO:0007669"/>
    <property type="project" value="UniProtKB-SubCell"/>
</dbReference>
<dbReference type="GO" id="GO:0003700">
    <property type="term" value="F:DNA-binding transcription factor activity"/>
    <property type="evidence" value="ECO:0007669"/>
    <property type="project" value="UniProtKB-UniRule"/>
</dbReference>
<dbReference type="GO" id="GO:0000976">
    <property type="term" value="F:transcription cis-regulatory region binding"/>
    <property type="evidence" value="ECO:0007669"/>
    <property type="project" value="TreeGrafter"/>
</dbReference>
<dbReference type="GO" id="GO:2000143">
    <property type="term" value="P:negative regulation of DNA-templated transcription initiation"/>
    <property type="evidence" value="ECO:0007669"/>
    <property type="project" value="TreeGrafter"/>
</dbReference>
<dbReference type="CDD" id="cd16321">
    <property type="entry name" value="MraZ_C"/>
    <property type="match status" value="1"/>
</dbReference>
<dbReference type="CDD" id="cd16320">
    <property type="entry name" value="MraZ_N"/>
    <property type="match status" value="1"/>
</dbReference>
<dbReference type="Gene3D" id="3.40.1550.20">
    <property type="entry name" value="Transcriptional regulator MraZ domain"/>
    <property type="match status" value="1"/>
</dbReference>
<dbReference type="HAMAP" id="MF_01008">
    <property type="entry name" value="MraZ"/>
    <property type="match status" value="1"/>
</dbReference>
<dbReference type="InterPro" id="IPR003444">
    <property type="entry name" value="MraZ"/>
</dbReference>
<dbReference type="InterPro" id="IPR035644">
    <property type="entry name" value="MraZ_C"/>
</dbReference>
<dbReference type="InterPro" id="IPR020603">
    <property type="entry name" value="MraZ_dom"/>
</dbReference>
<dbReference type="InterPro" id="IPR035642">
    <property type="entry name" value="MraZ_N"/>
</dbReference>
<dbReference type="InterPro" id="IPR038619">
    <property type="entry name" value="MraZ_sf"/>
</dbReference>
<dbReference type="InterPro" id="IPR007159">
    <property type="entry name" value="SpoVT-AbrB_dom"/>
</dbReference>
<dbReference type="InterPro" id="IPR037914">
    <property type="entry name" value="SpoVT-AbrB_sf"/>
</dbReference>
<dbReference type="NCBIfam" id="TIGR00242">
    <property type="entry name" value="division/cell wall cluster transcriptional repressor MraZ"/>
    <property type="match status" value="1"/>
</dbReference>
<dbReference type="PANTHER" id="PTHR34701">
    <property type="entry name" value="TRANSCRIPTIONAL REGULATOR MRAZ"/>
    <property type="match status" value="1"/>
</dbReference>
<dbReference type="PANTHER" id="PTHR34701:SF1">
    <property type="entry name" value="TRANSCRIPTIONAL REGULATOR MRAZ"/>
    <property type="match status" value="1"/>
</dbReference>
<dbReference type="Pfam" id="PF02381">
    <property type="entry name" value="MraZ"/>
    <property type="match status" value="2"/>
</dbReference>
<dbReference type="SUPFAM" id="SSF89447">
    <property type="entry name" value="AbrB/MazE/MraZ-like"/>
    <property type="match status" value="1"/>
</dbReference>
<dbReference type="PROSITE" id="PS51740">
    <property type="entry name" value="SPOVT_ABRB"/>
    <property type="match status" value="2"/>
</dbReference>